<sequence>MPSAPDAPAAPDAAASVAPNPPAALPVTVRWLGETPYDACFDAMRAFTDARTPDTDDEIWVVEHPPVYTLGQAGNPAHLLVADSGVPLVKVDRGGQITYHGPGQIVAYLLVDLRRRKLMVRTLVTRIEEAVIETLAAYNLASARKAGAPGIYVESGPHRGAKIAALGLKIRNGCSYHGLSVNVKMDLRPFLAINPCGYAGLETIDMASLGATADWHEVAQTLVRRLIAHLDGATAAAALPQQALEQSND</sequence>
<evidence type="ECO:0000255" key="1">
    <source>
        <dbReference type="HAMAP-Rule" id="MF_00013"/>
    </source>
</evidence>
<evidence type="ECO:0000255" key="2">
    <source>
        <dbReference type="PROSITE-ProRule" id="PRU01067"/>
    </source>
</evidence>
<dbReference type="EC" id="2.3.1.181" evidence="1"/>
<dbReference type="EMBL" id="CP000546">
    <property type="protein sequence ID" value="ABN01207.1"/>
    <property type="molecule type" value="Genomic_DNA"/>
</dbReference>
<dbReference type="SMR" id="A2S5Y8"/>
<dbReference type="KEGG" id="bml:BMA10229_A1374"/>
<dbReference type="HOGENOM" id="CLU_035168_3_1_4"/>
<dbReference type="UniPathway" id="UPA00538">
    <property type="reaction ID" value="UER00592"/>
</dbReference>
<dbReference type="Proteomes" id="UP000002283">
    <property type="component" value="Chromosome I"/>
</dbReference>
<dbReference type="GO" id="GO:0005737">
    <property type="term" value="C:cytoplasm"/>
    <property type="evidence" value="ECO:0007669"/>
    <property type="project" value="UniProtKB-SubCell"/>
</dbReference>
<dbReference type="GO" id="GO:0033819">
    <property type="term" value="F:lipoyl(octanoyl) transferase activity"/>
    <property type="evidence" value="ECO:0007669"/>
    <property type="project" value="UniProtKB-EC"/>
</dbReference>
<dbReference type="GO" id="GO:0036211">
    <property type="term" value="P:protein modification process"/>
    <property type="evidence" value="ECO:0007669"/>
    <property type="project" value="InterPro"/>
</dbReference>
<dbReference type="CDD" id="cd16444">
    <property type="entry name" value="LipB"/>
    <property type="match status" value="1"/>
</dbReference>
<dbReference type="FunFam" id="3.30.930.10:FF:000020">
    <property type="entry name" value="Octanoyltransferase"/>
    <property type="match status" value="1"/>
</dbReference>
<dbReference type="Gene3D" id="3.30.930.10">
    <property type="entry name" value="Bira Bifunctional Protein, Domain 2"/>
    <property type="match status" value="1"/>
</dbReference>
<dbReference type="HAMAP" id="MF_00013">
    <property type="entry name" value="LipB"/>
    <property type="match status" value="1"/>
</dbReference>
<dbReference type="InterPro" id="IPR045864">
    <property type="entry name" value="aa-tRNA-synth_II/BPL/LPL"/>
</dbReference>
<dbReference type="InterPro" id="IPR004143">
    <property type="entry name" value="BPL_LPL_catalytic"/>
</dbReference>
<dbReference type="InterPro" id="IPR000544">
    <property type="entry name" value="Octanoyltransferase"/>
</dbReference>
<dbReference type="InterPro" id="IPR020605">
    <property type="entry name" value="Octanoyltransferase_CS"/>
</dbReference>
<dbReference type="NCBIfam" id="TIGR00214">
    <property type="entry name" value="lipB"/>
    <property type="match status" value="1"/>
</dbReference>
<dbReference type="NCBIfam" id="NF010922">
    <property type="entry name" value="PRK14342.1"/>
    <property type="match status" value="1"/>
</dbReference>
<dbReference type="NCBIfam" id="NF010923">
    <property type="entry name" value="PRK14343.1"/>
    <property type="match status" value="1"/>
</dbReference>
<dbReference type="PANTHER" id="PTHR10993:SF7">
    <property type="entry name" value="LIPOYLTRANSFERASE 2, MITOCHONDRIAL-RELATED"/>
    <property type="match status" value="1"/>
</dbReference>
<dbReference type="PANTHER" id="PTHR10993">
    <property type="entry name" value="OCTANOYLTRANSFERASE"/>
    <property type="match status" value="1"/>
</dbReference>
<dbReference type="Pfam" id="PF21948">
    <property type="entry name" value="LplA-B_cat"/>
    <property type="match status" value="1"/>
</dbReference>
<dbReference type="PIRSF" id="PIRSF016262">
    <property type="entry name" value="LPLase"/>
    <property type="match status" value="1"/>
</dbReference>
<dbReference type="SUPFAM" id="SSF55681">
    <property type="entry name" value="Class II aaRS and biotin synthetases"/>
    <property type="match status" value="1"/>
</dbReference>
<dbReference type="PROSITE" id="PS51733">
    <property type="entry name" value="BPL_LPL_CATALYTIC"/>
    <property type="match status" value="1"/>
</dbReference>
<dbReference type="PROSITE" id="PS01313">
    <property type="entry name" value="LIPB"/>
    <property type="match status" value="1"/>
</dbReference>
<comment type="function">
    <text evidence="1">Catalyzes the transfer of endogenously produced octanoic acid from octanoyl-acyl-carrier-protein onto the lipoyl domains of lipoate-dependent enzymes. Lipoyl-ACP can also act as a substrate although octanoyl-ACP is likely to be the physiological substrate.</text>
</comment>
<comment type="catalytic activity">
    <reaction evidence="1">
        <text>octanoyl-[ACP] + L-lysyl-[protein] = N(6)-octanoyl-L-lysyl-[protein] + holo-[ACP] + H(+)</text>
        <dbReference type="Rhea" id="RHEA:17665"/>
        <dbReference type="Rhea" id="RHEA-COMP:9636"/>
        <dbReference type="Rhea" id="RHEA-COMP:9685"/>
        <dbReference type="Rhea" id="RHEA-COMP:9752"/>
        <dbReference type="Rhea" id="RHEA-COMP:9928"/>
        <dbReference type="ChEBI" id="CHEBI:15378"/>
        <dbReference type="ChEBI" id="CHEBI:29969"/>
        <dbReference type="ChEBI" id="CHEBI:64479"/>
        <dbReference type="ChEBI" id="CHEBI:78463"/>
        <dbReference type="ChEBI" id="CHEBI:78809"/>
        <dbReference type="EC" id="2.3.1.181"/>
    </reaction>
</comment>
<comment type="pathway">
    <text evidence="1">Protein modification; protein lipoylation via endogenous pathway; protein N(6)-(lipoyl)lysine from octanoyl-[acyl-carrier-protein]: step 1/2.</text>
</comment>
<comment type="subcellular location">
    <subcellularLocation>
        <location evidence="1">Cytoplasm</location>
    </subcellularLocation>
</comment>
<comment type="miscellaneous">
    <text evidence="1">In the reaction, the free carboxyl group of octanoic acid is attached via an amide linkage to the epsilon-amino group of a specific lysine residue of lipoyl domains of lipoate-dependent enzymes.</text>
</comment>
<comment type="similarity">
    <text evidence="1">Belongs to the LipB family.</text>
</comment>
<accession>A2S5Y8</accession>
<feature type="chain" id="PRO_1000001092" description="Octanoyltransferase">
    <location>
        <begin position="1"/>
        <end position="249"/>
    </location>
</feature>
<feature type="domain" description="BPL/LPL catalytic" evidence="2">
    <location>
        <begin position="53"/>
        <end position="234"/>
    </location>
</feature>
<feature type="active site" description="Acyl-thioester intermediate" evidence="1">
    <location>
        <position position="196"/>
    </location>
</feature>
<feature type="binding site" evidence="1">
    <location>
        <begin position="93"/>
        <end position="100"/>
    </location>
    <ligand>
        <name>substrate</name>
    </ligand>
</feature>
<feature type="binding site" evidence="1">
    <location>
        <begin position="165"/>
        <end position="167"/>
    </location>
    <ligand>
        <name>substrate</name>
    </ligand>
</feature>
<feature type="binding site" evidence="1">
    <location>
        <begin position="178"/>
        <end position="180"/>
    </location>
    <ligand>
        <name>substrate</name>
    </ligand>
</feature>
<feature type="site" description="Lowers pKa of active site Cys" evidence="1">
    <location>
        <position position="162"/>
    </location>
</feature>
<organism>
    <name type="scientific">Burkholderia mallei (strain NCTC 10229)</name>
    <dbReference type="NCBI Taxonomy" id="412022"/>
    <lineage>
        <taxon>Bacteria</taxon>
        <taxon>Pseudomonadati</taxon>
        <taxon>Pseudomonadota</taxon>
        <taxon>Betaproteobacteria</taxon>
        <taxon>Burkholderiales</taxon>
        <taxon>Burkholderiaceae</taxon>
        <taxon>Burkholderia</taxon>
        <taxon>pseudomallei group</taxon>
    </lineage>
</organism>
<gene>
    <name evidence="1" type="primary">lipB</name>
    <name type="ordered locus">BMA10229_A1374</name>
</gene>
<proteinExistence type="inferred from homology"/>
<keyword id="KW-0012">Acyltransferase</keyword>
<keyword id="KW-0963">Cytoplasm</keyword>
<keyword id="KW-0808">Transferase</keyword>
<reference key="1">
    <citation type="journal article" date="2010" name="Genome Biol. Evol.">
        <title>Continuing evolution of Burkholderia mallei through genome reduction and large-scale rearrangements.</title>
        <authorList>
            <person name="Losada L."/>
            <person name="Ronning C.M."/>
            <person name="DeShazer D."/>
            <person name="Woods D."/>
            <person name="Fedorova N."/>
            <person name="Kim H.S."/>
            <person name="Shabalina S.A."/>
            <person name="Pearson T.R."/>
            <person name="Brinkac L."/>
            <person name="Tan P."/>
            <person name="Nandi T."/>
            <person name="Crabtree J."/>
            <person name="Badger J."/>
            <person name="Beckstrom-Sternberg S."/>
            <person name="Saqib M."/>
            <person name="Schutzer S.E."/>
            <person name="Keim P."/>
            <person name="Nierman W.C."/>
        </authorList>
    </citation>
    <scope>NUCLEOTIDE SEQUENCE [LARGE SCALE GENOMIC DNA]</scope>
    <source>
        <strain>NCTC 10229</strain>
    </source>
</reference>
<name>LIPB_BURM9</name>
<protein>
    <recommendedName>
        <fullName evidence="1">Octanoyltransferase</fullName>
        <ecNumber evidence="1">2.3.1.181</ecNumber>
    </recommendedName>
    <alternativeName>
        <fullName evidence="1">Lipoate-protein ligase B</fullName>
    </alternativeName>
    <alternativeName>
        <fullName evidence="1">Lipoyl/octanoyl transferase</fullName>
    </alternativeName>
    <alternativeName>
        <fullName evidence="1">Octanoyl-[acyl-carrier-protein]-protein N-octanoyltransferase</fullName>
    </alternativeName>
</protein>